<organism>
    <name type="scientific">Coprinopsis cinerea (strain Okayama-7 / 130 / ATCC MYA-4618 / FGSC 9003)</name>
    <name type="common">Inky cap fungus</name>
    <name type="synonym">Hormographiella aspergillata</name>
    <dbReference type="NCBI Taxonomy" id="240176"/>
    <lineage>
        <taxon>Eukaryota</taxon>
        <taxon>Fungi</taxon>
        <taxon>Dikarya</taxon>
        <taxon>Basidiomycota</taxon>
        <taxon>Agaricomycotina</taxon>
        <taxon>Agaricomycetes</taxon>
        <taxon>Agaricomycetidae</taxon>
        <taxon>Agaricales</taxon>
        <taxon>Agaricineae</taxon>
        <taxon>Psathyrellaceae</taxon>
        <taxon>Coprinopsis</taxon>
    </lineage>
</organism>
<dbReference type="EC" id="2.7.4.3" evidence="1"/>
<dbReference type="EMBL" id="AACS02000002">
    <property type="protein sequence ID" value="EAU81921.1"/>
    <property type="molecule type" value="Genomic_DNA"/>
</dbReference>
<dbReference type="RefSeq" id="XP_001839942.1">
    <property type="nucleotide sequence ID" value="XM_001839890.2"/>
</dbReference>
<dbReference type="SMR" id="A8PAA1"/>
<dbReference type="FunCoup" id="A8PAA1">
    <property type="interactions" value="516"/>
</dbReference>
<dbReference type="STRING" id="240176.A8PAA1"/>
<dbReference type="GeneID" id="6016565"/>
<dbReference type="KEGG" id="cci:CC1G_06132"/>
<dbReference type="VEuPathDB" id="FungiDB:CC1G_06132"/>
<dbReference type="eggNOG" id="KOG3078">
    <property type="taxonomic scope" value="Eukaryota"/>
</dbReference>
<dbReference type="HOGENOM" id="CLU_032354_1_0_1"/>
<dbReference type="InParanoid" id="A8PAA1"/>
<dbReference type="OMA" id="VYHEQTA"/>
<dbReference type="OrthoDB" id="439792at2759"/>
<dbReference type="Proteomes" id="UP000001861">
    <property type="component" value="Unassembled WGS sequence"/>
</dbReference>
<dbReference type="GO" id="GO:0005829">
    <property type="term" value="C:cytosol"/>
    <property type="evidence" value="ECO:0007669"/>
    <property type="project" value="UniProtKB-SubCell"/>
</dbReference>
<dbReference type="GO" id="GO:0005758">
    <property type="term" value="C:mitochondrial intermembrane space"/>
    <property type="evidence" value="ECO:0007669"/>
    <property type="project" value="UniProtKB-SubCell"/>
</dbReference>
<dbReference type="GO" id="GO:0004017">
    <property type="term" value="F:adenylate kinase activity"/>
    <property type="evidence" value="ECO:0007669"/>
    <property type="project" value="UniProtKB-UniRule"/>
</dbReference>
<dbReference type="GO" id="GO:0005524">
    <property type="term" value="F:ATP binding"/>
    <property type="evidence" value="ECO:0007669"/>
    <property type="project" value="UniProtKB-KW"/>
</dbReference>
<dbReference type="GO" id="GO:0006172">
    <property type="term" value="P:ADP biosynthetic process"/>
    <property type="evidence" value="ECO:0007669"/>
    <property type="project" value="UniProtKB-UniRule"/>
</dbReference>
<dbReference type="GO" id="GO:0046033">
    <property type="term" value="P:AMP metabolic process"/>
    <property type="evidence" value="ECO:0007669"/>
    <property type="project" value="UniProtKB-UniRule"/>
</dbReference>
<dbReference type="GO" id="GO:0046034">
    <property type="term" value="P:ATP metabolic process"/>
    <property type="evidence" value="ECO:0007669"/>
    <property type="project" value="UniProtKB-UniRule"/>
</dbReference>
<dbReference type="CDD" id="cd01428">
    <property type="entry name" value="ADK"/>
    <property type="match status" value="1"/>
</dbReference>
<dbReference type="FunFam" id="3.40.50.300:FF:000106">
    <property type="entry name" value="Adenylate kinase mitochondrial"/>
    <property type="match status" value="1"/>
</dbReference>
<dbReference type="Gene3D" id="3.40.50.300">
    <property type="entry name" value="P-loop containing nucleotide triphosphate hydrolases"/>
    <property type="match status" value="1"/>
</dbReference>
<dbReference type="HAMAP" id="MF_00235">
    <property type="entry name" value="Adenylate_kinase_Adk"/>
    <property type="match status" value="1"/>
</dbReference>
<dbReference type="HAMAP" id="MF_03168">
    <property type="entry name" value="Adenylate_kinase_AK2"/>
    <property type="match status" value="1"/>
</dbReference>
<dbReference type="InterPro" id="IPR006259">
    <property type="entry name" value="Adenyl_kin_sub"/>
</dbReference>
<dbReference type="InterPro" id="IPR000850">
    <property type="entry name" value="Adenylat/UMP-CMP_kin"/>
</dbReference>
<dbReference type="InterPro" id="IPR033690">
    <property type="entry name" value="Adenylat_kinase_CS"/>
</dbReference>
<dbReference type="InterPro" id="IPR007862">
    <property type="entry name" value="Adenylate_kinase_lid-dom"/>
</dbReference>
<dbReference type="InterPro" id="IPR028587">
    <property type="entry name" value="AK2"/>
</dbReference>
<dbReference type="InterPro" id="IPR027417">
    <property type="entry name" value="P-loop_NTPase"/>
</dbReference>
<dbReference type="NCBIfam" id="TIGR01351">
    <property type="entry name" value="adk"/>
    <property type="match status" value="1"/>
</dbReference>
<dbReference type="NCBIfam" id="NF001381">
    <property type="entry name" value="PRK00279.1-3"/>
    <property type="match status" value="1"/>
</dbReference>
<dbReference type="NCBIfam" id="NF011100">
    <property type="entry name" value="PRK14527.1"/>
    <property type="match status" value="1"/>
</dbReference>
<dbReference type="PANTHER" id="PTHR23359">
    <property type="entry name" value="NUCLEOTIDE KINASE"/>
    <property type="match status" value="1"/>
</dbReference>
<dbReference type="Pfam" id="PF00406">
    <property type="entry name" value="ADK"/>
    <property type="match status" value="1"/>
</dbReference>
<dbReference type="Pfam" id="PF05191">
    <property type="entry name" value="ADK_lid"/>
    <property type="match status" value="1"/>
</dbReference>
<dbReference type="PRINTS" id="PR00094">
    <property type="entry name" value="ADENYLTKNASE"/>
</dbReference>
<dbReference type="SUPFAM" id="SSF52540">
    <property type="entry name" value="P-loop containing nucleoside triphosphate hydrolases"/>
    <property type="match status" value="1"/>
</dbReference>
<dbReference type="PROSITE" id="PS00113">
    <property type="entry name" value="ADENYLATE_KINASE"/>
    <property type="match status" value="1"/>
</dbReference>
<protein>
    <recommendedName>
        <fullName evidence="1">Adenylate kinase</fullName>
        <ecNumber evidence="1">2.7.4.3</ecNumber>
    </recommendedName>
    <alternativeName>
        <fullName evidence="1">ATP-AMP transphosphorylase</fullName>
    </alternativeName>
    <alternativeName>
        <fullName evidence="1">ATP:AMP phosphotransferase</fullName>
    </alternativeName>
    <alternativeName>
        <fullName evidence="1">Adenylate kinase cytosolic and mitochondrial</fullName>
    </alternativeName>
    <alternativeName>
        <fullName evidence="1">Adenylate monophosphate kinase</fullName>
    </alternativeName>
</protein>
<proteinExistence type="inferred from homology"/>
<feature type="chain" id="PRO_0000365671" description="Adenylate kinase">
    <location>
        <begin position="1"/>
        <end position="256"/>
    </location>
</feature>
<feature type="region of interest" description="NMP" evidence="1">
    <location>
        <begin position="69"/>
        <end position="98"/>
    </location>
</feature>
<feature type="region of interest" description="LID" evidence="1">
    <location>
        <begin position="166"/>
        <end position="203"/>
    </location>
</feature>
<feature type="binding site" evidence="1">
    <location>
        <begin position="49"/>
        <end position="54"/>
    </location>
    <ligand>
        <name>ATP</name>
        <dbReference type="ChEBI" id="CHEBI:30616"/>
    </ligand>
</feature>
<feature type="binding site" evidence="1">
    <location>
        <position position="70"/>
    </location>
    <ligand>
        <name>AMP</name>
        <dbReference type="ChEBI" id="CHEBI:456215"/>
    </ligand>
</feature>
<feature type="binding site" evidence="1">
    <location>
        <position position="75"/>
    </location>
    <ligand>
        <name>AMP</name>
        <dbReference type="ChEBI" id="CHEBI:456215"/>
    </ligand>
</feature>
<feature type="binding site" evidence="1">
    <location>
        <begin position="96"/>
        <end position="98"/>
    </location>
    <ligand>
        <name>AMP</name>
        <dbReference type="ChEBI" id="CHEBI:456215"/>
    </ligand>
</feature>
<feature type="binding site" evidence="1">
    <location>
        <begin position="125"/>
        <end position="128"/>
    </location>
    <ligand>
        <name>AMP</name>
        <dbReference type="ChEBI" id="CHEBI:456215"/>
    </ligand>
</feature>
<feature type="binding site" evidence="1">
    <location>
        <position position="132"/>
    </location>
    <ligand>
        <name>AMP</name>
        <dbReference type="ChEBI" id="CHEBI:456215"/>
    </ligand>
</feature>
<feature type="binding site" evidence="1">
    <location>
        <position position="167"/>
    </location>
    <ligand>
        <name>ATP</name>
        <dbReference type="ChEBI" id="CHEBI:30616"/>
    </ligand>
</feature>
<feature type="binding site" evidence="1">
    <location>
        <begin position="176"/>
        <end position="177"/>
    </location>
    <ligand>
        <name>ATP</name>
        <dbReference type="ChEBI" id="CHEBI:30616"/>
    </ligand>
</feature>
<feature type="binding site" evidence="1">
    <location>
        <position position="200"/>
    </location>
    <ligand>
        <name>AMP</name>
        <dbReference type="ChEBI" id="CHEBI:456215"/>
    </ligand>
</feature>
<feature type="binding site" evidence="1">
    <location>
        <position position="211"/>
    </location>
    <ligand>
        <name>AMP</name>
        <dbReference type="ChEBI" id="CHEBI:456215"/>
    </ligand>
</feature>
<feature type="binding site" evidence="1">
    <location>
        <position position="239"/>
    </location>
    <ligand>
        <name>ATP</name>
        <dbReference type="ChEBI" id="CHEBI:30616"/>
    </ligand>
</feature>
<evidence type="ECO:0000255" key="1">
    <source>
        <dbReference type="HAMAP-Rule" id="MF_03168"/>
    </source>
</evidence>
<name>KAD2_COPC7</name>
<keyword id="KW-0067">ATP-binding</keyword>
<keyword id="KW-0963">Cytoplasm</keyword>
<keyword id="KW-0418">Kinase</keyword>
<keyword id="KW-0496">Mitochondrion</keyword>
<keyword id="KW-0547">Nucleotide-binding</keyword>
<keyword id="KW-1185">Reference proteome</keyword>
<keyword id="KW-0808">Transferase</keyword>
<gene>
    <name evidence="1" type="primary">ADK1</name>
    <name type="ORF">CC1G_06132</name>
</gene>
<comment type="function">
    <text evidence="1">Catalyzes the reversible transfer of the terminal phosphate group between ATP and AMP. Plays an important role in cellular energy homeostasis and in adenine nucleotide metabolism. Adenylate kinase activity is critical for regulation of the phosphate utilization and the AMP de novo biosynthesis pathways.</text>
</comment>
<comment type="catalytic activity">
    <reaction evidence="1">
        <text>AMP + ATP = 2 ADP</text>
        <dbReference type="Rhea" id="RHEA:12973"/>
        <dbReference type="ChEBI" id="CHEBI:30616"/>
        <dbReference type="ChEBI" id="CHEBI:456215"/>
        <dbReference type="ChEBI" id="CHEBI:456216"/>
        <dbReference type="EC" id="2.7.4.3"/>
    </reaction>
</comment>
<comment type="subunit">
    <text evidence="1">Monomer.</text>
</comment>
<comment type="subcellular location">
    <subcellularLocation>
        <location evidence="1">Cytoplasm</location>
        <location evidence="1">Cytosol</location>
    </subcellularLocation>
    <subcellularLocation>
        <location evidence="1">Mitochondrion intermembrane space</location>
    </subcellularLocation>
    <text evidence="1">Predominantly mitochondrial.</text>
</comment>
<comment type="domain">
    <text evidence="1">Consists of three domains, a large central CORE domain and two small peripheral domains, NMPbind and LID, which undergo movements during catalysis. The LID domain closes over the site of phosphoryl transfer upon ATP binding. Assembling and dissambling the active center during each catalytic cycle provides an effective means to prevent ATP hydrolysis.</text>
</comment>
<comment type="similarity">
    <text evidence="1">Belongs to the adenylate kinase family. AK2 subfamily.</text>
</comment>
<sequence>MGASEELEYLKSLVAQLNDKIASLEAKAKGPASKTPAQQLRTILIGPPGAGKGTQAPRIRDEFCVCHLATGDMLRDQVEKKTPLGIAAKKIMDAGGLVSDDIMVNMIKDQLENNEACKNGFVLDGFPRTVPQAQKLDGMLAERKEKLDSVVQLLIDDQLLISRITGRLIHPASGRSYHKIFNPPKKAGIDDLTGEPLIQRSDDNAETLTRRLKTYHTQTGPVVDYYKAKGLWHGVDAAQSPSVVWDSMRGIFAGRK</sequence>
<accession>A8PAA1</accession>
<reference key="1">
    <citation type="journal article" date="2010" name="Proc. Natl. Acad. Sci. U.S.A.">
        <title>Insights into evolution of multicellular fungi from the assembled chromosomes of the mushroom Coprinopsis cinerea (Coprinus cinereus).</title>
        <authorList>
            <person name="Stajich J.E."/>
            <person name="Wilke S.K."/>
            <person name="Ahren D."/>
            <person name="Au C.H."/>
            <person name="Birren B.W."/>
            <person name="Borodovsky M."/>
            <person name="Burns C."/>
            <person name="Canbaeck B."/>
            <person name="Casselton L.A."/>
            <person name="Cheng C.K."/>
            <person name="Deng J."/>
            <person name="Dietrich F.S."/>
            <person name="Fargo D.C."/>
            <person name="Farman M.L."/>
            <person name="Gathman A.C."/>
            <person name="Goldberg J."/>
            <person name="Guigo R."/>
            <person name="Hoegger P.J."/>
            <person name="Hooker J.B."/>
            <person name="Huggins A."/>
            <person name="James T.Y."/>
            <person name="Kamada T."/>
            <person name="Kilaru S."/>
            <person name="Kodira C."/>
            <person name="Kuees U."/>
            <person name="Kupfer D."/>
            <person name="Kwan H.S."/>
            <person name="Lomsadze A."/>
            <person name="Li W."/>
            <person name="Lilly W.W."/>
            <person name="Ma L.-J."/>
            <person name="Mackey A.J."/>
            <person name="Manning G."/>
            <person name="Martin F."/>
            <person name="Muraguchi H."/>
            <person name="Natvig D.O."/>
            <person name="Palmerini H."/>
            <person name="Ramesh M.A."/>
            <person name="Rehmeyer C.J."/>
            <person name="Roe B.A."/>
            <person name="Shenoy N."/>
            <person name="Stanke M."/>
            <person name="Ter-Hovhannisyan V."/>
            <person name="Tunlid A."/>
            <person name="Velagapudi R."/>
            <person name="Vision T.J."/>
            <person name="Zeng Q."/>
            <person name="Zolan M.E."/>
            <person name="Pukkila P.J."/>
        </authorList>
    </citation>
    <scope>NUCLEOTIDE SEQUENCE [LARGE SCALE GENOMIC DNA]</scope>
    <source>
        <strain>Okayama-7 / 130 / ATCC MYA-4618 / FGSC 9003</strain>
    </source>
</reference>